<accession>Q8FKZ1</accession>
<name>GMHBB_ECOL6</name>
<gene>
    <name type="primary">gmhB</name>
    <name type="ordered locus">c0241</name>
</gene>
<dbReference type="EC" id="3.1.3.82"/>
<dbReference type="EMBL" id="AE014075">
    <property type="protein sequence ID" value="AAN78733.1"/>
    <property type="molecule type" value="Genomic_DNA"/>
</dbReference>
<dbReference type="RefSeq" id="WP_001140167.1">
    <property type="nucleotide sequence ID" value="NZ_CP051263.1"/>
</dbReference>
<dbReference type="SMR" id="Q8FKZ1"/>
<dbReference type="STRING" id="199310.c0241"/>
<dbReference type="KEGG" id="ecc:c0241"/>
<dbReference type="eggNOG" id="COG0241">
    <property type="taxonomic scope" value="Bacteria"/>
</dbReference>
<dbReference type="HOGENOM" id="CLU_085077_3_0_6"/>
<dbReference type="BioCyc" id="ECOL199310:C0241-MONOMER"/>
<dbReference type="UniPathway" id="UPA00356">
    <property type="reaction ID" value="UER00438"/>
</dbReference>
<dbReference type="UniPathway" id="UPA00958"/>
<dbReference type="Proteomes" id="UP000001410">
    <property type="component" value="Chromosome"/>
</dbReference>
<dbReference type="GO" id="GO:0005737">
    <property type="term" value="C:cytoplasm"/>
    <property type="evidence" value="ECO:0007669"/>
    <property type="project" value="UniProtKB-SubCell"/>
</dbReference>
<dbReference type="GO" id="GO:0034200">
    <property type="term" value="F:D-glycero-beta-D-manno-heptose 1,7-bisphosphate 7-phosphatase activity"/>
    <property type="evidence" value="ECO:0000250"/>
    <property type="project" value="UniProtKB"/>
</dbReference>
<dbReference type="GO" id="GO:0000287">
    <property type="term" value="F:magnesium ion binding"/>
    <property type="evidence" value="ECO:0000250"/>
    <property type="project" value="UniProtKB"/>
</dbReference>
<dbReference type="GO" id="GO:0008270">
    <property type="term" value="F:zinc ion binding"/>
    <property type="evidence" value="ECO:0000250"/>
    <property type="project" value="UniProtKB"/>
</dbReference>
<dbReference type="GO" id="GO:0097171">
    <property type="term" value="P:ADP-L-glycero-beta-D-manno-heptose biosynthetic process"/>
    <property type="evidence" value="ECO:0007669"/>
    <property type="project" value="UniProtKB-UniPathway"/>
</dbReference>
<dbReference type="GO" id="GO:0009244">
    <property type="term" value="P:lipopolysaccharide core region biosynthetic process"/>
    <property type="evidence" value="ECO:0007669"/>
    <property type="project" value="UniProtKB-UniPathway"/>
</dbReference>
<dbReference type="CDD" id="cd07503">
    <property type="entry name" value="HAD_HisB-N"/>
    <property type="match status" value="1"/>
</dbReference>
<dbReference type="FunFam" id="3.40.50.1000:FF:000037">
    <property type="entry name" value="D,D-heptose 1,7-bisphosphate phosphatase"/>
    <property type="match status" value="1"/>
</dbReference>
<dbReference type="Gene3D" id="3.40.50.1000">
    <property type="entry name" value="HAD superfamily/HAD-like"/>
    <property type="match status" value="1"/>
</dbReference>
<dbReference type="InterPro" id="IPR036412">
    <property type="entry name" value="HAD-like_sf"/>
</dbReference>
<dbReference type="InterPro" id="IPR006549">
    <property type="entry name" value="HAD-SF_hydro_IIIA"/>
</dbReference>
<dbReference type="InterPro" id="IPR023214">
    <property type="entry name" value="HAD_sf"/>
</dbReference>
<dbReference type="InterPro" id="IPR004446">
    <property type="entry name" value="Heptose_bisP_phosphatase"/>
</dbReference>
<dbReference type="InterPro" id="IPR006543">
    <property type="entry name" value="Histidinol-phos"/>
</dbReference>
<dbReference type="NCBIfam" id="TIGR00213">
    <property type="entry name" value="GmhB_yaeD"/>
    <property type="match status" value="1"/>
</dbReference>
<dbReference type="NCBIfam" id="TIGR01662">
    <property type="entry name" value="HAD-SF-IIIA"/>
    <property type="match status" value="1"/>
</dbReference>
<dbReference type="NCBIfam" id="TIGR01656">
    <property type="entry name" value="Histidinol-ppas"/>
    <property type="match status" value="1"/>
</dbReference>
<dbReference type="NCBIfam" id="NF006506">
    <property type="entry name" value="PRK08942.1"/>
    <property type="match status" value="1"/>
</dbReference>
<dbReference type="PANTHER" id="PTHR42891">
    <property type="entry name" value="D-GLYCERO-BETA-D-MANNO-HEPTOSE-1,7-BISPHOSPHATE 7-PHOSPHATASE"/>
    <property type="match status" value="1"/>
</dbReference>
<dbReference type="PANTHER" id="PTHR42891:SF1">
    <property type="entry name" value="D-GLYCERO-BETA-D-MANNO-HEPTOSE-1,7-BISPHOSPHATE 7-PHOSPHATASE"/>
    <property type="match status" value="1"/>
</dbReference>
<dbReference type="Pfam" id="PF13242">
    <property type="entry name" value="Hydrolase_like"/>
    <property type="match status" value="1"/>
</dbReference>
<dbReference type="PIRSF" id="PIRSF004682">
    <property type="entry name" value="GmhB"/>
    <property type="match status" value="1"/>
</dbReference>
<dbReference type="SFLD" id="SFLDG01134">
    <property type="entry name" value="C1.5.5:_Heptose_Bisphosphate_P"/>
    <property type="match status" value="1"/>
</dbReference>
<dbReference type="SFLD" id="SFLDG01129">
    <property type="entry name" value="C1.5:_HAD__Beta-PGM__Phosphata"/>
    <property type="match status" value="1"/>
</dbReference>
<dbReference type="SUPFAM" id="SSF56784">
    <property type="entry name" value="HAD-like"/>
    <property type="match status" value="1"/>
</dbReference>
<proteinExistence type="inferred from homology"/>
<protein>
    <recommendedName>
        <fullName>D-glycero-beta-D-manno-heptose-1,7-bisphosphate 7-phosphatase</fullName>
        <ecNumber>3.1.3.82</ecNumber>
    </recommendedName>
    <alternativeName>
        <fullName>D,D-heptose 1,7-bisphosphate phosphatase</fullName>
        <shortName>HBP phosphatase</shortName>
    </alternativeName>
</protein>
<sequence>MAKSVPAIFLDRDGTINVDHGYVHEIDNFEFIDGVIDAMRELKKMGFALVVVTNQSGIARGKFTEAQFETLTEWMDWSLADRDVDLDGIYYCPHHPQGSVEEFRQVCDCRKPHPGMFLSARDYLHIDMAASYMVGDKLEDMQAAAAASVGTKVLVRTGKPITPEAENAADWVLNSLADLPQAIKKQQKPA</sequence>
<evidence type="ECO:0000250" key="1"/>
<evidence type="ECO:0000250" key="2">
    <source>
        <dbReference type="UniProtKB" id="Q7WG29"/>
    </source>
</evidence>
<evidence type="ECO:0000305" key="3"/>
<organism>
    <name type="scientific">Escherichia coli O6:H1 (strain CFT073 / ATCC 700928 / UPEC)</name>
    <dbReference type="NCBI Taxonomy" id="199310"/>
    <lineage>
        <taxon>Bacteria</taxon>
        <taxon>Pseudomonadati</taxon>
        <taxon>Pseudomonadota</taxon>
        <taxon>Gammaproteobacteria</taxon>
        <taxon>Enterobacterales</taxon>
        <taxon>Enterobacteriaceae</taxon>
        <taxon>Escherichia</taxon>
    </lineage>
</organism>
<feature type="chain" id="PRO_0000209391" description="D-glycero-beta-D-manno-heptose-1,7-bisphosphate 7-phosphatase">
    <location>
        <begin position="1"/>
        <end position="190"/>
    </location>
</feature>
<feature type="active site" description="Nucleophile" evidence="1">
    <location>
        <position position="11"/>
    </location>
</feature>
<feature type="active site" description="Proton donor" evidence="1">
    <location>
        <position position="13"/>
    </location>
</feature>
<feature type="binding site" evidence="1">
    <location>
        <begin position="11"/>
        <end position="13"/>
    </location>
    <ligand>
        <name>substrate</name>
    </ligand>
</feature>
<feature type="binding site" evidence="1">
    <location>
        <position position="11"/>
    </location>
    <ligand>
        <name>Mg(2+)</name>
        <dbReference type="ChEBI" id="CHEBI:18420"/>
    </ligand>
</feature>
<feature type="binding site" evidence="1">
    <location>
        <position position="13"/>
    </location>
    <ligand>
        <name>Mg(2+)</name>
        <dbReference type="ChEBI" id="CHEBI:18420"/>
    </ligand>
</feature>
<feature type="binding site" evidence="1">
    <location>
        <begin position="19"/>
        <end position="22"/>
    </location>
    <ligand>
        <name>substrate</name>
    </ligand>
</feature>
<feature type="binding site" evidence="1">
    <location>
        <begin position="53"/>
        <end position="56"/>
    </location>
    <ligand>
        <name>substrate</name>
    </ligand>
</feature>
<feature type="binding site" evidence="2">
    <location>
        <position position="92"/>
    </location>
    <ligand>
        <name>Zn(2+)</name>
        <dbReference type="ChEBI" id="CHEBI:29105"/>
    </ligand>
</feature>
<feature type="binding site" evidence="2">
    <location>
        <position position="94"/>
    </location>
    <ligand>
        <name>Zn(2+)</name>
        <dbReference type="ChEBI" id="CHEBI:29105"/>
    </ligand>
</feature>
<feature type="binding site" evidence="2">
    <location>
        <position position="107"/>
    </location>
    <ligand>
        <name>Zn(2+)</name>
        <dbReference type="ChEBI" id="CHEBI:29105"/>
    </ligand>
</feature>
<feature type="binding site" evidence="2">
    <location>
        <position position="109"/>
    </location>
    <ligand>
        <name>Zn(2+)</name>
        <dbReference type="ChEBI" id="CHEBI:29105"/>
    </ligand>
</feature>
<feature type="binding site" evidence="1">
    <location>
        <begin position="110"/>
        <end position="111"/>
    </location>
    <ligand>
        <name>substrate</name>
    </ligand>
</feature>
<feature type="binding site" evidence="1">
    <location>
        <position position="136"/>
    </location>
    <ligand>
        <name>Mg(2+)</name>
        <dbReference type="ChEBI" id="CHEBI:18420"/>
    </ligand>
</feature>
<feature type="binding site" evidence="1">
    <location>
        <position position="137"/>
    </location>
    <ligand>
        <name>Mg(2+)</name>
        <dbReference type="ChEBI" id="CHEBI:18420"/>
    </ligand>
</feature>
<feature type="binding site" evidence="1">
    <location>
        <position position="137"/>
    </location>
    <ligand>
        <name>substrate</name>
    </ligand>
</feature>
<feature type="site" description="Stabilizes the phosphoryl group" evidence="1">
    <location>
        <position position="53"/>
    </location>
</feature>
<feature type="site" description="Contributes to substrate recognition" evidence="1">
    <location>
        <position position="110"/>
    </location>
</feature>
<feature type="site" description="Stabilizes the phosphoryl group" evidence="1">
    <location>
        <position position="111"/>
    </location>
</feature>
<comment type="function">
    <text evidence="1">Converts the D-glycero-beta-D-manno-heptose 1,7-bisphosphate intermediate into D-glycero-beta-D-manno-heptose 1-phosphate by removing the phosphate group at the C-7 position.</text>
</comment>
<comment type="catalytic activity">
    <reaction>
        <text>D-glycero-beta-D-manno-heptose 1,7-bisphosphate + H2O = D-glycero-beta-D-manno-heptose 1-phosphate + phosphate</text>
        <dbReference type="Rhea" id="RHEA:28518"/>
        <dbReference type="ChEBI" id="CHEBI:15377"/>
        <dbReference type="ChEBI" id="CHEBI:43474"/>
        <dbReference type="ChEBI" id="CHEBI:60208"/>
        <dbReference type="ChEBI" id="CHEBI:61593"/>
        <dbReference type="EC" id="3.1.3.82"/>
    </reaction>
</comment>
<comment type="cofactor">
    <cofactor evidence="1">
        <name>Mg(2+)</name>
        <dbReference type="ChEBI" id="CHEBI:18420"/>
    </cofactor>
</comment>
<comment type="cofactor">
    <cofactor evidence="1">
        <name>Zn(2+)</name>
        <dbReference type="ChEBI" id="CHEBI:29105"/>
    </cofactor>
</comment>
<comment type="pathway">
    <text>Nucleotide-sugar biosynthesis; ADP-L-glycero-beta-D-manno-heptose biosynthesis; ADP-L-glycero-beta-D-manno-heptose from D-glycero-beta-D-manno-heptose 7-phosphate: step 2/4.</text>
</comment>
<comment type="pathway">
    <text>Bacterial outer membrane biogenesis; LPS core biosynthesis.</text>
</comment>
<comment type="subunit">
    <text evidence="1">Monomer.</text>
</comment>
<comment type="subcellular location">
    <subcellularLocation>
        <location evidence="1">Cytoplasm</location>
    </subcellularLocation>
</comment>
<comment type="similarity">
    <text evidence="3">Belongs to the GmhB family.</text>
</comment>
<reference key="1">
    <citation type="journal article" date="2002" name="Proc. Natl. Acad. Sci. U.S.A.">
        <title>Extensive mosaic structure revealed by the complete genome sequence of uropathogenic Escherichia coli.</title>
        <authorList>
            <person name="Welch R.A."/>
            <person name="Burland V."/>
            <person name="Plunkett G. III"/>
            <person name="Redford P."/>
            <person name="Roesch P."/>
            <person name="Rasko D."/>
            <person name="Buckles E.L."/>
            <person name="Liou S.-R."/>
            <person name="Boutin A."/>
            <person name="Hackett J."/>
            <person name="Stroud D."/>
            <person name="Mayhew G.F."/>
            <person name="Rose D.J."/>
            <person name="Zhou S."/>
            <person name="Schwartz D.C."/>
            <person name="Perna N.T."/>
            <person name="Mobley H.L.T."/>
            <person name="Donnenberg M.S."/>
            <person name="Blattner F.R."/>
        </authorList>
    </citation>
    <scope>NUCLEOTIDE SEQUENCE [LARGE SCALE GENOMIC DNA]</scope>
    <source>
        <strain>CFT073 / ATCC 700928 / UPEC</strain>
    </source>
</reference>
<keyword id="KW-0119">Carbohydrate metabolism</keyword>
<keyword id="KW-0963">Cytoplasm</keyword>
<keyword id="KW-0378">Hydrolase</keyword>
<keyword id="KW-0448">Lipopolysaccharide biosynthesis</keyword>
<keyword id="KW-0460">Magnesium</keyword>
<keyword id="KW-0479">Metal-binding</keyword>
<keyword id="KW-1185">Reference proteome</keyword>
<keyword id="KW-0862">Zinc</keyword>